<comment type="function">
    <text evidence="1">Hydrolyzes the pyrophosphate bond of UDP-2,3-diacylglucosamine to yield 2,3-diacylglucosamine 1-phosphate (lipid X) and UMP by catalyzing the attack of water at the alpha-P atom. Involved in the biosynthesis of lipid A, a phosphorylated glycolipid that anchors the lipopolysaccharide to the outer membrane of the cell.</text>
</comment>
<comment type="catalytic activity">
    <reaction evidence="1">
        <text>UDP-2-N,3-O-bis[(3R)-3-hydroxytetradecanoyl]-alpha-D-glucosamine + H2O = 2-N,3-O-bis[(3R)-3-hydroxytetradecanoyl]-alpha-D-glucosaminyl 1-phosphate + UMP + 2 H(+)</text>
        <dbReference type="Rhea" id="RHEA:25213"/>
        <dbReference type="ChEBI" id="CHEBI:15377"/>
        <dbReference type="ChEBI" id="CHEBI:15378"/>
        <dbReference type="ChEBI" id="CHEBI:57865"/>
        <dbReference type="ChEBI" id="CHEBI:57957"/>
        <dbReference type="ChEBI" id="CHEBI:78847"/>
        <dbReference type="EC" id="3.6.1.54"/>
    </reaction>
</comment>
<comment type="cofactor">
    <cofactor evidence="1">
        <name>Mn(2+)</name>
        <dbReference type="ChEBI" id="CHEBI:29035"/>
    </cofactor>
    <text evidence="1">Binds 2 Mn(2+) ions per subunit in a binuclear metal center.</text>
</comment>
<comment type="pathway">
    <text evidence="1">Glycolipid biosynthesis; lipid IV(A) biosynthesis; lipid IV(A) from (3R)-3-hydroxytetradecanoyl-[acyl-carrier-protein] and UDP-N-acetyl-alpha-D-glucosamine: step 4/6.</text>
</comment>
<comment type="subcellular location">
    <subcellularLocation>
        <location evidence="1">Cell inner membrane</location>
        <topology evidence="1">Peripheral membrane protein</topology>
        <orientation evidence="1">Cytoplasmic side</orientation>
    </subcellularLocation>
</comment>
<comment type="similarity">
    <text evidence="1">Belongs to the LpxH family.</text>
</comment>
<feature type="chain" id="PRO_1000129547" description="UDP-2,3-diacylglucosamine hydrolase">
    <location>
        <begin position="1"/>
        <end position="240"/>
    </location>
</feature>
<feature type="binding site" evidence="1">
    <location>
        <position position="8"/>
    </location>
    <ligand>
        <name>Mn(2+)</name>
        <dbReference type="ChEBI" id="CHEBI:29035"/>
        <label>1</label>
    </ligand>
</feature>
<feature type="binding site" evidence="1">
    <location>
        <position position="10"/>
    </location>
    <ligand>
        <name>Mn(2+)</name>
        <dbReference type="ChEBI" id="CHEBI:29035"/>
        <label>1</label>
    </ligand>
</feature>
<feature type="binding site" evidence="1">
    <location>
        <position position="41"/>
    </location>
    <ligand>
        <name>Mn(2+)</name>
        <dbReference type="ChEBI" id="CHEBI:29035"/>
        <label>1</label>
    </ligand>
</feature>
<feature type="binding site" evidence="1">
    <location>
        <position position="41"/>
    </location>
    <ligand>
        <name>Mn(2+)</name>
        <dbReference type="ChEBI" id="CHEBI:29035"/>
        <label>2</label>
    </ligand>
</feature>
<feature type="binding site" evidence="1">
    <location>
        <begin position="79"/>
        <end position="80"/>
    </location>
    <ligand>
        <name>substrate</name>
    </ligand>
</feature>
<feature type="binding site" evidence="1">
    <location>
        <position position="79"/>
    </location>
    <ligand>
        <name>Mn(2+)</name>
        <dbReference type="ChEBI" id="CHEBI:29035"/>
        <label>2</label>
    </ligand>
</feature>
<feature type="binding site" evidence="1">
    <location>
        <position position="114"/>
    </location>
    <ligand>
        <name>Mn(2+)</name>
        <dbReference type="ChEBI" id="CHEBI:29035"/>
        <label>2</label>
    </ligand>
</feature>
<feature type="binding site" evidence="1">
    <location>
        <position position="122"/>
    </location>
    <ligand>
        <name>substrate</name>
    </ligand>
</feature>
<feature type="binding site" evidence="1">
    <location>
        <position position="160"/>
    </location>
    <ligand>
        <name>substrate</name>
    </ligand>
</feature>
<feature type="binding site" evidence="1">
    <location>
        <position position="164"/>
    </location>
    <ligand>
        <name>substrate</name>
    </ligand>
</feature>
<feature type="binding site" evidence="1">
    <location>
        <position position="167"/>
    </location>
    <ligand>
        <name>substrate</name>
    </ligand>
</feature>
<feature type="binding site" evidence="1">
    <location>
        <position position="195"/>
    </location>
    <ligand>
        <name>Mn(2+)</name>
        <dbReference type="ChEBI" id="CHEBI:29035"/>
        <label>2</label>
    </ligand>
</feature>
<feature type="binding site" evidence="1">
    <location>
        <position position="195"/>
    </location>
    <ligand>
        <name>substrate</name>
    </ligand>
</feature>
<feature type="binding site" evidence="1">
    <location>
        <position position="197"/>
    </location>
    <ligand>
        <name>Mn(2+)</name>
        <dbReference type="ChEBI" id="CHEBI:29035"/>
        <label>1</label>
    </ligand>
</feature>
<organism>
    <name type="scientific">Yersinia pseudotuberculosis serotype IB (strain PB1/+)</name>
    <dbReference type="NCBI Taxonomy" id="502801"/>
    <lineage>
        <taxon>Bacteria</taxon>
        <taxon>Pseudomonadati</taxon>
        <taxon>Pseudomonadota</taxon>
        <taxon>Gammaproteobacteria</taxon>
        <taxon>Enterobacterales</taxon>
        <taxon>Yersiniaceae</taxon>
        <taxon>Yersinia</taxon>
    </lineage>
</organism>
<evidence type="ECO:0000255" key="1">
    <source>
        <dbReference type="HAMAP-Rule" id="MF_00575"/>
    </source>
</evidence>
<proteinExistence type="inferred from homology"/>
<protein>
    <recommendedName>
        <fullName evidence="1">UDP-2,3-diacylglucosamine hydrolase</fullName>
        <ecNumber evidence="1">3.6.1.54</ecNumber>
    </recommendedName>
    <alternativeName>
        <fullName evidence="1">UDP-2,3-diacylglucosamine diphosphatase</fullName>
    </alternativeName>
</protein>
<keyword id="KW-0997">Cell inner membrane</keyword>
<keyword id="KW-1003">Cell membrane</keyword>
<keyword id="KW-0378">Hydrolase</keyword>
<keyword id="KW-0441">Lipid A biosynthesis</keyword>
<keyword id="KW-0444">Lipid biosynthesis</keyword>
<keyword id="KW-0443">Lipid metabolism</keyword>
<keyword id="KW-0464">Manganese</keyword>
<keyword id="KW-0472">Membrane</keyword>
<keyword id="KW-0479">Metal-binding</keyword>
<accession>B2K7N0</accession>
<name>LPXH_YERPB</name>
<dbReference type="EC" id="3.6.1.54" evidence="1"/>
<dbReference type="EMBL" id="CP001048">
    <property type="protein sequence ID" value="ACC88060.1"/>
    <property type="molecule type" value="Genomic_DNA"/>
</dbReference>
<dbReference type="RefSeq" id="WP_002208568.1">
    <property type="nucleotide sequence ID" value="NZ_CP009780.1"/>
</dbReference>
<dbReference type="SMR" id="B2K7N0"/>
<dbReference type="KEGG" id="ypb:YPTS_1081"/>
<dbReference type="PATRIC" id="fig|502801.10.peg.423"/>
<dbReference type="UniPathway" id="UPA00359">
    <property type="reaction ID" value="UER00480"/>
</dbReference>
<dbReference type="GO" id="GO:0005737">
    <property type="term" value="C:cytoplasm"/>
    <property type="evidence" value="ECO:0007669"/>
    <property type="project" value="InterPro"/>
</dbReference>
<dbReference type="GO" id="GO:0019897">
    <property type="term" value="C:extrinsic component of plasma membrane"/>
    <property type="evidence" value="ECO:0007669"/>
    <property type="project" value="UniProtKB-UniRule"/>
</dbReference>
<dbReference type="GO" id="GO:0030145">
    <property type="term" value="F:manganese ion binding"/>
    <property type="evidence" value="ECO:0007669"/>
    <property type="project" value="UniProtKB-UniRule"/>
</dbReference>
<dbReference type="GO" id="GO:0008758">
    <property type="term" value="F:UDP-2,3-diacylglucosamine hydrolase activity"/>
    <property type="evidence" value="ECO:0007669"/>
    <property type="project" value="UniProtKB-UniRule"/>
</dbReference>
<dbReference type="GO" id="GO:0009245">
    <property type="term" value="P:lipid A biosynthetic process"/>
    <property type="evidence" value="ECO:0007669"/>
    <property type="project" value="UniProtKB-UniRule"/>
</dbReference>
<dbReference type="CDD" id="cd07398">
    <property type="entry name" value="MPP_YbbF-LpxH"/>
    <property type="match status" value="1"/>
</dbReference>
<dbReference type="FunFam" id="3.60.21.10:FF:000074">
    <property type="entry name" value="UDP-2,3-diacylglucosamine hydrolase"/>
    <property type="match status" value="1"/>
</dbReference>
<dbReference type="Gene3D" id="3.60.21.10">
    <property type="match status" value="1"/>
</dbReference>
<dbReference type="HAMAP" id="MF_00575">
    <property type="entry name" value="LpxH"/>
    <property type="match status" value="1"/>
</dbReference>
<dbReference type="InterPro" id="IPR004843">
    <property type="entry name" value="Calcineurin-like_PHP_ApaH"/>
</dbReference>
<dbReference type="InterPro" id="IPR043461">
    <property type="entry name" value="LpxH-like"/>
</dbReference>
<dbReference type="InterPro" id="IPR029052">
    <property type="entry name" value="Metallo-depent_PP-like"/>
</dbReference>
<dbReference type="InterPro" id="IPR010138">
    <property type="entry name" value="UDP-diacylglucosamine_Hdrlase"/>
</dbReference>
<dbReference type="NCBIfam" id="TIGR01854">
    <property type="entry name" value="lipid_A_lpxH"/>
    <property type="match status" value="1"/>
</dbReference>
<dbReference type="NCBIfam" id="NF003743">
    <property type="entry name" value="PRK05340.1"/>
    <property type="match status" value="1"/>
</dbReference>
<dbReference type="PANTHER" id="PTHR34990:SF1">
    <property type="entry name" value="UDP-2,3-DIACYLGLUCOSAMINE HYDROLASE"/>
    <property type="match status" value="1"/>
</dbReference>
<dbReference type="PANTHER" id="PTHR34990">
    <property type="entry name" value="UDP-2,3-DIACYLGLUCOSAMINE HYDROLASE-RELATED"/>
    <property type="match status" value="1"/>
</dbReference>
<dbReference type="Pfam" id="PF00149">
    <property type="entry name" value="Metallophos"/>
    <property type="match status" value="1"/>
</dbReference>
<dbReference type="SUPFAM" id="SSF56300">
    <property type="entry name" value="Metallo-dependent phosphatases"/>
    <property type="match status" value="1"/>
</dbReference>
<sequence>MSTLFIADLHLSVQEPAITAGFLHFIQREAIHADALYILGDLFESWIGDDDPEPLYRQVAAALKSLQQQGVPCYFIHGNRDFLLGKRFAEESGMVLLPEENVVELYGRKILILHGDTLCTDDTDYQHFRKKVHNPLIQKLFLWIPLRLRLRIAAYMRNKSQQNNSGKSERIMDVNSKAVIDAFLRHDVSWMIHGHTHRPAIHSVELPMVTAHRVVLGAWHVEGSMVKVTADNVELITFPF</sequence>
<gene>
    <name evidence="1" type="primary">lpxH</name>
    <name type="ordered locus">YPTS_1081</name>
</gene>
<reference key="1">
    <citation type="submission" date="2008-04" db="EMBL/GenBank/DDBJ databases">
        <title>Complete sequence of Yersinia pseudotuberculosis PB1/+.</title>
        <authorList>
            <person name="Copeland A."/>
            <person name="Lucas S."/>
            <person name="Lapidus A."/>
            <person name="Glavina del Rio T."/>
            <person name="Dalin E."/>
            <person name="Tice H."/>
            <person name="Bruce D."/>
            <person name="Goodwin L."/>
            <person name="Pitluck S."/>
            <person name="Munk A.C."/>
            <person name="Brettin T."/>
            <person name="Detter J.C."/>
            <person name="Han C."/>
            <person name="Tapia R."/>
            <person name="Schmutz J."/>
            <person name="Larimer F."/>
            <person name="Land M."/>
            <person name="Hauser L."/>
            <person name="Challacombe J.F."/>
            <person name="Green L."/>
            <person name="Lindler L.E."/>
            <person name="Nikolich M.P."/>
            <person name="Richardson P."/>
        </authorList>
    </citation>
    <scope>NUCLEOTIDE SEQUENCE [LARGE SCALE GENOMIC DNA]</scope>
    <source>
        <strain>PB1/+</strain>
    </source>
</reference>